<dbReference type="EC" id="1.17.1.8" evidence="1"/>
<dbReference type="EMBL" id="CP000124">
    <property type="protein sequence ID" value="ABA49266.1"/>
    <property type="molecule type" value="Genomic_DNA"/>
</dbReference>
<dbReference type="SMR" id="Q3JNM7"/>
<dbReference type="EnsemblBacteria" id="ABA49266">
    <property type="protein sequence ID" value="ABA49266"/>
    <property type="gene ID" value="BURPS1710b_3455"/>
</dbReference>
<dbReference type="KEGG" id="bpm:BURPS1710b_3455"/>
<dbReference type="HOGENOM" id="CLU_047479_2_1_4"/>
<dbReference type="UniPathway" id="UPA00034">
    <property type="reaction ID" value="UER00018"/>
</dbReference>
<dbReference type="Proteomes" id="UP000002700">
    <property type="component" value="Chromosome I"/>
</dbReference>
<dbReference type="GO" id="GO:0005829">
    <property type="term" value="C:cytosol"/>
    <property type="evidence" value="ECO:0007669"/>
    <property type="project" value="TreeGrafter"/>
</dbReference>
<dbReference type="GO" id="GO:0008839">
    <property type="term" value="F:4-hydroxy-tetrahydrodipicolinate reductase"/>
    <property type="evidence" value="ECO:0007669"/>
    <property type="project" value="UniProtKB-EC"/>
</dbReference>
<dbReference type="GO" id="GO:0051287">
    <property type="term" value="F:NAD binding"/>
    <property type="evidence" value="ECO:0007669"/>
    <property type="project" value="UniProtKB-UniRule"/>
</dbReference>
<dbReference type="GO" id="GO:0050661">
    <property type="term" value="F:NADP binding"/>
    <property type="evidence" value="ECO:0007669"/>
    <property type="project" value="UniProtKB-UniRule"/>
</dbReference>
<dbReference type="GO" id="GO:0016726">
    <property type="term" value="F:oxidoreductase activity, acting on CH or CH2 groups, NAD or NADP as acceptor"/>
    <property type="evidence" value="ECO:0007669"/>
    <property type="project" value="UniProtKB-UniRule"/>
</dbReference>
<dbReference type="GO" id="GO:0019877">
    <property type="term" value="P:diaminopimelate biosynthetic process"/>
    <property type="evidence" value="ECO:0007669"/>
    <property type="project" value="UniProtKB-UniRule"/>
</dbReference>
<dbReference type="GO" id="GO:0009089">
    <property type="term" value="P:lysine biosynthetic process via diaminopimelate"/>
    <property type="evidence" value="ECO:0007669"/>
    <property type="project" value="UniProtKB-UniRule"/>
</dbReference>
<dbReference type="CDD" id="cd02274">
    <property type="entry name" value="DHDPR_N"/>
    <property type="match status" value="1"/>
</dbReference>
<dbReference type="FunFam" id="3.30.360.10:FF:000004">
    <property type="entry name" value="4-hydroxy-tetrahydrodipicolinate reductase"/>
    <property type="match status" value="1"/>
</dbReference>
<dbReference type="FunFam" id="3.40.50.720:FF:000048">
    <property type="entry name" value="4-hydroxy-tetrahydrodipicolinate reductase"/>
    <property type="match status" value="1"/>
</dbReference>
<dbReference type="Gene3D" id="3.30.360.10">
    <property type="entry name" value="Dihydrodipicolinate Reductase, domain 2"/>
    <property type="match status" value="1"/>
</dbReference>
<dbReference type="Gene3D" id="3.40.50.720">
    <property type="entry name" value="NAD(P)-binding Rossmann-like Domain"/>
    <property type="match status" value="1"/>
</dbReference>
<dbReference type="HAMAP" id="MF_00102">
    <property type="entry name" value="DapB"/>
    <property type="match status" value="1"/>
</dbReference>
<dbReference type="InterPro" id="IPR022663">
    <property type="entry name" value="DapB_C"/>
</dbReference>
<dbReference type="InterPro" id="IPR000846">
    <property type="entry name" value="DapB_N"/>
</dbReference>
<dbReference type="InterPro" id="IPR022664">
    <property type="entry name" value="DapB_N_CS"/>
</dbReference>
<dbReference type="InterPro" id="IPR023940">
    <property type="entry name" value="DHDPR_bac"/>
</dbReference>
<dbReference type="InterPro" id="IPR036291">
    <property type="entry name" value="NAD(P)-bd_dom_sf"/>
</dbReference>
<dbReference type="NCBIfam" id="TIGR00036">
    <property type="entry name" value="dapB"/>
    <property type="match status" value="1"/>
</dbReference>
<dbReference type="PANTHER" id="PTHR20836:SF0">
    <property type="entry name" value="4-HYDROXY-TETRAHYDRODIPICOLINATE REDUCTASE 1, CHLOROPLASTIC-RELATED"/>
    <property type="match status" value="1"/>
</dbReference>
<dbReference type="PANTHER" id="PTHR20836">
    <property type="entry name" value="DIHYDRODIPICOLINATE REDUCTASE"/>
    <property type="match status" value="1"/>
</dbReference>
<dbReference type="Pfam" id="PF05173">
    <property type="entry name" value="DapB_C"/>
    <property type="match status" value="1"/>
</dbReference>
<dbReference type="Pfam" id="PF01113">
    <property type="entry name" value="DapB_N"/>
    <property type="match status" value="1"/>
</dbReference>
<dbReference type="PIRSF" id="PIRSF000161">
    <property type="entry name" value="DHPR"/>
    <property type="match status" value="1"/>
</dbReference>
<dbReference type="SUPFAM" id="SSF55347">
    <property type="entry name" value="Glyceraldehyde-3-phosphate dehydrogenase-like, C-terminal domain"/>
    <property type="match status" value="1"/>
</dbReference>
<dbReference type="SUPFAM" id="SSF51735">
    <property type="entry name" value="NAD(P)-binding Rossmann-fold domains"/>
    <property type="match status" value="1"/>
</dbReference>
<dbReference type="PROSITE" id="PS01298">
    <property type="entry name" value="DAPB"/>
    <property type="match status" value="1"/>
</dbReference>
<organism>
    <name type="scientific">Burkholderia pseudomallei (strain 1710b)</name>
    <dbReference type="NCBI Taxonomy" id="320372"/>
    <lineage>
        <taxon>Bacteria</taxon>
        <taxon>Pseudomonadati</taxon>
        <taxon>Pseudomonadota</taxon>
        <taxon>Betaproteobacteria</taxon>
        <taxon>Burkholderiales</taxon>
        <taxon>Burkholderiaceae</taxon>
        <taxon>Burkholderia</taxon>
        <taxon>pseudomallei group</taxon>
    </lineage>
</organism>
<gene>
    <name evidence="1" type="primary">dapB</name>
    <name type="ordered locus">BURPS1710b_3455</name>
</gene>
<evidence type="ECO:0000255" key="1">
    <source>
        <dbReference type="HAMAP-Rule" id="MF_00102"/>
    </source>
</evidence>
<evidence type="ECO:0000305" key="2"/>
<name>DAPB_BURP1</name>
<sequence>MSSMKIAIAGASGRMGRMLIEAVLAAPDATLAGALDRTGSPQLGQDAGAFLGKQTGVALTDDIERVCAEADYLIDFTRPEGTLAHLDAALRHDVKLVIGTTGFSEPQKAQLRAAGGKIALVFSANMSVGVNVTMKLLEFAAKQFAQGYDIEIIEAHHRHKVDAPSGTALMMGETIAAATGRTLDDCAVYGRHGVTGERDPSTIGFSAIRGGDIVGDHTVLFAGIGERIEITHKSASRVSYAQGALRAARFLAGHQAGFFDMQDVLGLR</sequence>
<comment type="function">
    <text evidence="1">Catalyzes the conversion of 4-hydroxy-tetrahydrodipicolinate (HTPA) to tetrahydrodipicolinate.</text>
</comment>
<comment type="catalytic activity">
    <reaction evidence="1">
        <text>(S)-2,3,4,5-tetrahydrodipicolinate + NAD(+) + H2O = (2S,4S)-4-hydroxy-2,3,4,5-tetrahydrodipicolinate + NADH + H(+)</text>
        <dbReference type="Rhea" id="RHEA:35323"/>
        <dbReference type="ChEBI" id="CHEBI:15377"/>
        <dbReference type="ChEBI" id="CHEBI:15378"/>
        <dbReference type="ChEBI" id="CHEBI:16845"/>
        <dbReference type="ChEBI" id="CHEBI:57540"/>
        <dbReference type="ChEBI" id="CHEBI:57945"/>
        <dbReference type="ChEBI" id="CHEBI:67139"/>
        <dbReference type="EC" id="1.17.1.8"/>
    </reaction>
</comment>
<comment type="catalytic activity">
    <reaction evidence="1">
        <text>(S)-2,3,4,5-tetrahydrodipicolinate + NADP(+) + H2O = (2S,4S)-4-hydroxy-2,3,4,5-tetrahydrodipicolinate + NADPH + H(+)</text>
        <dbReference type="Rhea" id="RHEA:35331"/>
        <dbReference type="ChEBI" id="CHEBI:15377"/>
        <dbReference type="ChEBI" id="CHEBI:15378"/>
        <dbReference type="ChEBI" id="CHEBI:16845"/>
        <dbReference type="ChEBI" id="CHEBI:57783"/>
        <dbReference type="ChEBI" id="CHEBI:58349"/>
        <dbReference type="ChEBI" id="CHEBI:67139"/>
        <dbReference type="EC" id="1.17.1.8"/>
    </reaction>
</comment>
<comment type="pathway">
    <text evidence="1">Amino-acid biosynthesis; L-lysine biosynthesis via DAP pathway; (S)-tetrahydrodipicolinate from L-aspartate: step 4/4.</text>
</comment>
<comment type="subcellular location">
    <subcellularLocation>
        <location evidence="1">Cytoplasm</location>
    </subcellularLocation>
</comment>
<comment type="similarity">
    <text evidence="1">Belongs to the DapB family.</text>
</comment>
<comment type="caution">
    <text evidence="2">Was originally thought to be a dihydrodipicolinate reductase (DHDPR), catalyzing the conversion of dihydrodipicolinate to tetrahydrodipicolinate. However, it was shown in E.coli that the substrate of the enzymatic reaction is not dihydrodipicolinate (DHDP) but in fact (2S,4S)-4-hydroxy-2,3,4,5-tetrahydrodipicolinic acid (HTPA), the product released by the DapA-catalyzed reaction.</text>
</comment>
<proteinExistence type="inferred from homology"/>
<reference key="1">
    <citation type="journal article" date="2010" name="Genome Biol. Evol.">
        <title>Continuing evolution of Burkholderia mallei through genome reduction and large-scale rearrangements.</title>
        <authorList>
            <person name="Losada L."/>
            <person name="Ronning C.M."/>
            <person name="DeShazer D."/>
            <person name="Woods D."/>
            <person name="Fedorova N."/>
            <person name="Kim H.S."/>
            <person name="Shabalina S.A."/>
            <person name="Pearson T.R."/>
            <person name="Brinkac L."/>
            <person name="Tan P."/>
            <person name="Nandi T."/>
            <person name="Crabtree J."/>
            <person name="Badger J."/>
            <person name="Beckstrom-Sternberg S."/>
            <person name="Saqib M."/>
            <person name="Schutzer S.E."/>
            <person name="Keim P."/>
            <person name="Nierman W.C."/>
        </authorList>
    </citation>
    <scope>NUCLEOTIDE SEQUENCE [LARGE SCALE GENOMIC DNA]</scope>
    <source>
        <strain>1710b</strain>
    </source>
</reference>
<protein>
    <recommendedName>
        <fullName evidence="1">4-hydroxy-tetrahydrodipicolinate reductase</fullName>
        <shortName evidence="1">HTPA reductase</shortName>
        <ecNumber evidence="1">1.17.1.8</ecNumber>
    </recommendedName>
</protein>
<accession>Q3JNM7</accession>
<feature type="chain" id="PRO_0000228334" description="4-hydroxy-tetrahydrodipicolinate reductase">
    <location>
        <begin position="1"/>
        <end position="268"/>
    </location>
</feature>
<feature type="active site" description="Proton donor/acceptor" evidence="1">
    <location>
        <position position="156"/>
    </location>
</feature>
<feature type="active site" description="Proton donor" evidence="1">
    <location>
        <position position="160"/>
    </location>
</feature>
<feature type="binding site" evidence="1">
    <location>
        <begin position="10"/>
        <end position="15"/>
    </location>
    <ligand>
        <name>NAD(+)</name>
        <dbReference type="ChEBI" id="CHEBI:57540"/>
    </ligand>
</feature>
<feature type="binding site" evidence="1">
    <location>
        <position position="36"/>
    </location>
    <ligand>
        <name>NAD(+)</name>
        <dbReference type="ChEBI" id="CHEBI:57540"/>
    </ligand>
</feature>
<feature type="binding site" evidence="1">
    <location>
        <position position="37"/>
    </location>
    <ligand>
        <name>NADP(+)</name>
        <dbReference type="ChEBI" id="CHEBI:58349"/>
    </ligand>
</feature>
<feature type="binding site" evidence="1">
    <location>
        <begin position="99"/>
        <end position="101"/>
    </location>
    <ligand>
        <name>NAD(+)</name>
        <dbReference type="ChEBI" id="CHEBI:57540"/>
    </ligand>
</feature>
<feature type="binding site" evidence="1">
    <location>
        <begin position="123"/>
        <end position="126"/>
    </location>
    <ligand>
        <name>NAD(+)</name>
        <dbReference type="ChEBI" id="CHEBI:57540"/>
    </ligand>
</feature>
<feature type="binding site" evidence="1">
    <location>
        <position position="157"/>
    </location>
    <ligand>
        <name>(S)-2,3,4,5-tetrahydrodipicolinate</name>
        <dbReference type="ChEBI" id="CHEBI:16845"/>
    </ligand>
</feature>
<feature type="binding site" evidence="1">
    <location>
        <begin position="166"/>
        <end position="167"/>
    </location>
    <ligand>
        <name>(S)-2,3,4,5-tetrahydrodipicolinate</name>
        <dbReference type="ChEBI" id="CHEBI:16845"/>
    </ligand>
</feature>
<keyword id="KW-0028">Amino-acid biosynthesis</keyword>
<keyword id="KW-0963">Cytoplasm</keyword>
<keyword id="KW-0220">Diaminopimelate biosynthesis</keyword>
<keyword id="KW-0457">Lysine biosynthesis</keyword>
<keyword id="KW-0520">NAD</keyword>
<keyword id="KW-0521">NADP</keyword>
<keyword id="KW-0560">Oxidoreductase</keyword>